<keyword id="KW-0963">Cytoplasm</keyword>
<keyword id="KW-0269">Exonuclease</keyword>
<keyword id="KW-0378">Hydrolase</keyword>
<keyword id="KW-0540">Nuclease</keyword>
<reference key="1">
    <citation type="journal article" date="2004" name="Nat. Genet.">
        <title>Comparison of genome degradation in Paratyphi A and Typhi, human-restricted serovars of Salmonella enterica that cause typhoid.</title>
        <authorList>
            <person name="McClelland M."/>
            <person name="Sanderson K.E."/>
            <person name="Clifton S.W."/>
            <person name="Latreille P."/>
            <person name="Porwollik S."/>
            <person name="Sabo A."/>
            <person name="Meyer R."/>
            <person name="Bieri T."/>
            <person name="Ozersky P."/>
            <person name="McLellan M."/>
            <person name="Harkins C.R."/>
            <person name="Wang C."/>
            <person name="Nguyen C."/>
            <person name="Berghoff A."/>
            <person name="Elliott G."/>
            <person name="Kohlberg S."/>
            <person name="Strong C."/>
            <person name="Du F."/>
            <person name="Carter J."/>
            <person name="Kremizki C."/>
            <person name="Layman D."/>
            <person name="Leonard S."/>
            <person name="Sun H."/>
            <person name="Fulton L."/>
            <person name="Nash W."/>
            <person name="Miner T."/>
            <person name="Minx P."/>
            <person name="Delehaunty K."/>
            <person name="Fronick C."/>
            <person name="Magrini V."/>
            <person name="Nhan M."/>
            <person name="Warren W."/>
            <person name="Florea L."/>
            <person name="Spieth J."/>
            <person name="Wilson R.K."/>
        </authorList>
    </citation>
    <scope>NUCLEOTIDE SEQUENCE [LARGE SCALE GENOMIC DNA]</scope>
    <source>
        <strain>ATCC 9150 / SARB42</strain>
    </source>
</reference>
<accession>Q5PI54</accession>
<organism>
    <name type="scientific">Salmonella paratyphi A (strain ATCC 9150 / SARB42)</name>
    <dbReference type="NCBI Taxonomy" id="295319"/>
    <lineage>
        <taxon>Bacteria</taxon>
        <taxon>Pseudomonadati</taxon>
        <taxon>Pseudomonadota</taxon>
        <taxon>Gammaproteobacteria</taxon>
        <taxon>Enterobacterales</taxon>
        <taxon>Enterobacteriaceae</taxon>
        <taxon>Salmonella</taxon>
    </lineage>
</organism>
<proteinExistence type="inferred from homology"/>
<comment type="function">
    <text evidence="1">Bidirectionally degrades single-stranded DNA into large acid-insoluble oligonucleotides, which are then degraded further into small acid-soluble oligonucleotides.</text>
</comment>
<comment type="catalytic activity">
    <reaction evidence="1">
        <text>Exonucleolytic cleavage in either 5'- to 3'- or 3'- to 5'-direction to yield nucleoside 5'-phosphates.</text>
        <dbReference type="EC" id="3.1.11.6"/>
    </reaction>
</comment>
<comment type="subunit">
    <text evidence="1">Heterooligomer composed of large and small subunits.</text>
</comment>
<comment type="subcellular location">
    <subcellularLocation>
        <location evidence="1">Cytoplasm</location>
    </subcellularLocation>
</comment>
<comment type="similarity">
    <text evidence="1">Belongs to the XseA family.</text>
</comment>
<gene>
    <name evidence="1" type="primary">xseA</name>
    <name type="ordered locus">SPA0355</name>
</gene>
<evidence type="ECO:0000255" key="1">
    <source>
        <dbReference type="HAMAP-Rule" id="MF_00378"/>
    </source>
</evidence>
<feature type="chain" id="PRO_0000273683" description="Exodeoxyribonuclease 7 large subunit">
    <location>
        <begin position="1"/>
        <end position="449"/>
    </location>
</feature>
<dbReference type="EC" id="3.1.11.6" evidence="1"/>
<dbReference type="EMBL" id="CP000026">
    <property type="protein sequence ID" value="AAV76369.1"/>
    <property type="molecule type" value="Genomic_DNA"/>
</dbReference>
<dbReference type="RefSeq" id="WP_000953178.1">
    <property type="nucleotide sequence ID" value="NC_006511.1"/>
</dbReference>
<dbReference type="SMR" id="Q5PI54"/>
<dbReference type="KEGG" id="spt:SPA0355"/>
<dbReference type="HOGENOM" id="CLU_023625_3_1_6"/>
<dbReference type="Proteomes" id="UP000008185">
    <property type="component" value="Chromosome"/>
</dbReference>
<dbReference type="GO" id="GO:0005737">
    <property type="term" value="C:cytoplasm"/>
    <property type="evidence" value="ECO:0007669"/>
    <property type="project" value="UniProtKB-SubCell"/>
</dbReference>
<dbReference type="GO" id="GO:0009318">
    <property type="term" value="C:exodeoxyribonuclease VII complex"/>
    <property type="evidence" value="ECO:0007669"/>
    <property type="project" value="InterPro"/>
</dbReference>
<dbReference type="GO" id="GO:0008855">
    <property type="term" value="F:exodeoxyribonuclease VII activity"/>
    <property type="evidence" value="ECO:0007669"/>
    <property type="project" value="UniProtKB-UniRule"/>
</dbReference>
<dbReference type="GO" id="GO:0003676">
    <property type="term" value="F:nucleic acid binding"/>
    <property type="evidence" value="ECO:0007669"/>
    <property type="project" value="InterPro"/>
</dbReference>
<dbReference type="GO" id="GO:0006308">
    <property type="term" value="P:DNA catabolic process"/>
    <property type="evidence" value="ECO:0007669"/>
    <property type="project" value="UniProtKB-UniRule"/>
</dbReference>
<dbReference type="CDD" id="cd04489">
    <property type="entry name" value="ExoVII_LU_OBF"/>
    <property type="match status" value="1"/>
</dbReference>
<dbReference type="HAMAP" id="MF_00378">
    <property type="entry name" value="Exonuc_7_L"/>
    <property type="match status" value="1"/>
</dbReference>
<dbReference type="InterPro" id="IPR003753">
    <property type="entry name" value="Exonuc_VII_L"/>
</dbReference>
<dbReference type="InterPro" id="IPR020579">
    <property type="entry name" value="Exonuc_VII_lsu_C"/>
</dbReference>
<dbReference type="InterPro" id="IPR025824">
    <property type="entry name" value="OB-fold_nuc-bd_dom"/>
</dbReference>
<dbReference type="NCBIfam" id="TIGR00237">
    <property type="entry name" value="xseA"/>
    <property type="match status" value="1"/>
</dbReference>
<dbReference type="PANTHER" id="PTHR30008">
    <property type="entry name" value="EXODEOXYRIBONUCLEASE 7 LARGE SUBUNIT"/>
    <property type="match status" value="1"/>
</dbReference>
<dbReference type="PANTHER" id="PTHR30008:SF0">
    <property type="entry name" value="EXODEOXYRIBONUCLEASE 7 LARGE SUBUNIT"/>
    <property type="match status" value="1"/>
</dbReference>
<dbReference type="Pfam" id="PF02601">
    <property type="entry name" value="Exonuc_VII_L"/>
    <property type="match status" value="1"/>
</dbReference>
<dbReference type="Pfam" id="PF13742">
    <property type="entry name" value="tRNA_anti_2"/>
    <property type="match status" value="1"/>
</dbReference>
<sequence>MLSSQTSSIFTVSRLNQTVRLLLEQEMGQVWISGEISNFTQPASGHWYFTLKDDTAQVRCAMFRNSNRRVTFRPQHGQQVLVRANITLYEPRGDYQVIAESMQPAGEGLLQQKYEQLKAKLQAEGLFDQQHKQPLPSPAHCVGVITSKTGAALHDILHVLKRRDPSLPVIIYPTAVQGDDAPGQIVRAIELANARGECDVLIVGRGGGSLEDLWSFNDERVARAIFASRIPVVSAVGHETDVTIADFVADLRAPTPSAAAEIVSRNQQELLRQIQSAQQRLGMAMDYYLANRSRRFTQIFHRLQQQHPQLRLARQQTALERLRQRMGFALEARIKQANQRQQRVSQRLSQQNPQPRIHRAQSRIQQLEYRLTENIRSRLSEQRERFGNAVTHLEAVSPLATLARGYTVSTTTDGKVLKKIKQVNAGDIMTTRLEDGWLESEVKSVTPGT</sequence>
<protein>
    <recommendedName>
        <fullName evidence="1">Exodeoxyribonuclease 7 large subunit</fullName>
        <ecNumber evidence="1">3.1.11.6</ecNumber>
    </recommendedName>
    <alternativeName>
        <fullName evidence="1">Exodeoxyribonuclease VII large subunit</fullName>
        <shortName evidence="1">Exonuclease VII large subunit</shortName>
    </alternativeName>
</protein>
<name>EX7L_SALPA</name>